<name>SOJ_THET2</name>
<evidence type="ECO:0000269" key="1">
    <source>
    </source>
</evidence>
<evidence type="ECO:0000303" key="2">
    <source>
    </source>
</evidence>
<evidence type="ECO:0000305" key="3"/>
<evidence type="ECO:0007744" key="4">
    <source>
        <dbReference type="PDB" id="1WCV"/>
    </source>
</evidence>
<evidence type="ECO:0007744" key="5">
    <source>
        <dbReference type="PDB" id="2BEJ"/>
    </source>
</evidence>
<evidence type="ECO:0007744" key="6">
    <source>
        <dbReference type="PDB" id="2BEK"/>
    </source>
</evidence>
<evidence type="ECO:0007829" key="7">
    <source>
        <dbReference type="PDB" id="1WCV"/>
    </source>
</evidence>
<evidence type="ECO:0007829" key="8">
    <source>
        <dbReference type="PDB" id="2BEK"/>
    </source>
</evidence>
<protein>
    <recommendedName>
        <fullName>Chromosome-partitioning ATPase Soj</fullName>
        <ecNumber evidence="1">3.6.4.-</ecNumber>
    </recommendedName>
</protein>
<sequence length="249" mass="26563">MLRAKVRRIALANQKGGVGKTTTAINLAAYLARLGKRVLLVDLDPQGNATSGLGVRAERGVYHLLQGEPLEGLVHPVDGFHLLPATPDLVGATVELAGAPTALREALRDEGYDLVLLDAPPSLSPLTLNALAAAEGVVVPVQAEYYALEGVAGLLATLEEVRAGLNPRLRLLGILVTMYDGRTLLAQQVEAQLRAHFGEKVFWTVIPRNVRLAEAPSFGKTIAQHAPTSPGAHAYRRLAEEVMARVQEA</sequence>
<comment type="function">
    <text evidence="1">ATPase probably involved in chromosome partitioning. Cooperatively binds dsDNA, forming nucleoprotein filaments in a strictly ATP-dependent fashion. Can also bind ssDNA with lower affinity.</text>
</comment>
<comment type="catalytic activity">
    <reaction evidence="1">
        <text>ATP + H2O = ADP + phosphate + H(+)</text>
        <dbReference type="Rhea" id="RHEA:13065"/>
        <dbReference type="ChEBI" id="CHEBI:15377"/>
        <dbReference type="ChEBI" id="CHEBI:15378"/>
        <dbReference type="ChEBI" id="CHEBI:30616"/>
        <dbReference type="ChEBI" id="CHEBI:43474"/>
        <dbReference type="ChEBI" id="CHEBI:456216"/>
    </reaction>
</comment>
<comment type="activity regulation">
    <text evidence="1">ATPase activity is stimulated 10-fold in the presence of Spo0J and parS DNA (a plasmid centromere-like site or plasmid DNA itself). The first 20 residues of Spo0J stimulate its ATPase activity by 8%.</text>
</comment>
<comment type="subunit">
    <text evidence="1">Monomer in the absence of nucleotides or presence of ADP, in the presence of ATP is found in a monomer-dimer equilibrium. ATP-binding is required for DNA-binding. Probably interacts with Spo0J.</text>
</comment>
<comment type="similarity">
    <text evidence="3">Belongs to the ParA family.</text>
</comment>
<keyword id="KW-0002">3D-structure</keyword>
<keyword id="KW-0067">ATP-binding</keyword>
<keyword id="KW-0159">Chromosome partition</keyword>
<keyword id="KW-0238">DNA-binding</keyword>
<keyword id="KW-0378">Hydrolase</keyword>
<keyword id="KW-0460">Magnesium</keyword>
<keyword id="KW-0479">Metal-binding</keyword>
<keyword id="KW-0547">Nucleotide-binding</keyword>
<reference key="1">
    <citation type="journal article" date="2004" name="Nat. Biotechnol.">
        <title>The genome sequence of the extreme thermophile Thermus thermophilus.</title>
        <authorList>
            <person name="Henne A."/>
            <person name="Brueggemann H."/>
            <person name="Raasch C."/>
            <person name="Wiezer A."/>
            <person name="Hartsch T."/>
            <person name="Liesegang H."/>
            <person name="Johann A."/>
            <person name="Lienard T."/>
            <person name="Gohl O."/>
            <person name="Martinez-Arias R."/>
            <person name="Jacobi C."/>
            <person name="Starkuviene V."/>
            <person name="Schlenczeck S."/>
            <person name="Dencker S."/>
            <person name="Huber R."/>
            <person name="Klenk H.-P."/>
            <person name="Kramer W."/>
            <person name="Merkl R."/>
            <person name="Gottschalk G."/>
            <person name="Fritz H.-J."/>
        </authorList>
    </citation>
    <scope>NUCLEOTIDE SEQUENCE [LARGE SCALE GENOMIC DNA]</scope>
    <source>
        <strain>ATCC BAA-163 / DSM 7039 / HB27</strain>
    </source>
</reference>
<reference evidence="4 5 6" key="2">
    <citation type="journal article" date="2005" name="EMBO J.">
        <title>Bacterial chromosome segregation: structure and DNA binding of the Soj dimer--a conserved biological switch.</title>
        <authorList>
            <person name="Leonard T.A."/>
            <person name="Butler P.J."/>
            <person name="Lowe J."/>
        </authorList>
    </citation>
    <scope>X-RAY CRYSTALLOGRAPHY (1.60 ANGSTROMS) IN COMPLEX WITH MG(2+); ADP OR ATP</scope>
    <scope>FUNCTION AS AN ATPASE</scope>
    <scope>ACTIVITY REGULATION</scope>
    <scope>SUBUNIT</scope>
    <scope>DNA-BINDING</scope>
    <scope>MUTAGENESIS OF GLY-16; LYS-20 AND ASP-44</scope>
    <source>
        <strain>ATCC BAA-163 / DSM 7039 / HB27</strain>
    </source>
</reference>
<gene>
    <name evidence="2" type="primary">soj</name>
    <name type="ordered locus">TT_C1605</name>
</gene>
<accession>Q72H90</accession>
<proteinExistence type="evidence at protein level"/>
<feature type="chain" id="PRO_0000422776" description="Chromosome-partitioning ATPase Soj">
    <location>
        <begin position="1"/>
        <end position="249"/>
    </location>
</feature>
<feature type="binding site" evidence="6">
    <location>
        <position position="15"/>
    </location>
    <ligand>
        <name>ATP</name>
        <dbReference type="ChEBI" id="CHEBI:30616"/>
    </ligand>
</feature>
<feature type="binding site" evidence="6">
    <location>
        <position position="16"/>
    </location>
    <ligand>
        <name>ATP</name>
        <dbReference type="ChEBI" id="CHEBI:30616"/>
    </ligand>
</feature>
<feature type="binding site" evidence="5">
    <location>
        <position position="17"/>
    </location>
    <ligand>
        <name>ADP</name>
        <dbReference type="ChEBI" id="CHEBI:456216"/>
    </ligand>
</feature>
<feature type="binding site" evidence="6">
    <location>
        <position position="17"/>
    </location>
    <ligand>
        <name>ATP</name>
        <dbReference type="ChEBI" id="CHEBI:30616"/>
    </ligand>
</feature>
<feature type="binding site" evidence="6">
    <location>
        <position position="18"/>
    </location>
    <ligand>
        <name>ATP</name>
        <dbReference type="ChEBI" id="CHEBI:30616"/>
    </ligand>
</feature>
<feature type="binding site" evidence="5">
    <location>
        <position position="19"/>
    </location>
    <ligand>
        <name>ADP</name>
        <dbReference type="ChEBI" id="CHEBI:456216"/>
    </ligand>
</feature>
<feature type="binding site" evidence="6">
    <location>
        <position position="19"/>
    </location>
    <ligand>
        <name>ATP</name>
        <dbReference type="ChEBI" id="CHEBI:30616"/>
    </ligand>
</feature>
<feature type="binding site" evidence="5">
    <location>
        <position position="20"/>
    </location>
    <ligand>
        <name>ADP</name>
        <dbReference type="ChEBI" id="CHEBI:456216"/>
    </ligand>
</feature>
<feature type="binding site" evidence="6">
    <location>
        <position position="20"/>
    </location>
    <ligand>
        <name>ATP</name>
        <dbReference type="ChEBI" id="CHEBI:30616"/>
    </ligand>
</feature>
<feature type="binding site" evidence="5">
    <location>
        <position position="21"/>
    </location>
    <ligand>
        <name>ADP</name>
        <dbReference type="ChEBI" id="CHEBI:456216"/>
    </ligand>
</feature>
<feature type="binding site" evidence="6">
    <location>
        <position position="21"/>
    </location>
    <ligand>
        <name>ATP</name>
        <dbReference type="ChEBI" id="CHEBI:30616"/>
    </ligand>
</feature>
<feature type="binding site" evidence="5 6">
    <location>
        <position position="21"/>
    </location>
    <ligand>
        <name>Mg(2+)</name>
        <dbReference type="ChEBI" id="CHEBI:18420"/>
    </ligand>
</feature>
<feature type="binding site" evidence="5">
    <location>
        <position position="22"/>
    </location>
    <ligand>
        <name>ADP</name>
        <dbReference type="ChEBI" id="CHEBI:456216"/>
    </ligand>
</feature>
<feature type="binding site" evidence="6">
    <location>
        <position position="22"/>
    </location>
    <ligand>
        <name>ATP</name>
        <dbReference type="ChEBI" id="CHEBI:30616"/>
    </ligand>
</feature>
<feature type="binding site" evidence="5">
    <location>
        <position position="207"/>
    </location>
    <ligand>
        <name>ADP</name>
        <dbReference type="ChEBI" id="CHEBI:456216"/>
    </ligand>
</feature>
<feature type="binding site" evidence="6">
    <location>
        <position position="207"/>
    </location>
    <ligand>
        <name>ATP</name>
        <dbReference type="ChEBI" id="CHEBI:30616"/>
    </ligand>
</feature>
<feature type="binding site" evidence="5">
    <location>
        <position position="209"/>
    </location>
    <ligand>
        <name>ADP</name>
        <dbReference type="ChEBI" id="CHEBI:456216"/>
    </ligand>
</feature>
<feature type="binding site" evidence="6">
    <location>
        <position position="209"/>
    </location>
    <ligand>
        <name>ATP</name>
        <dbReference type="ChEBI" id="CHEBI:30616"/>
    </ligand>
</feature>
<feature type="mutagenesis site" description="Dimerization-deficient despite ATP-binding." evidence="1">
    <original>G</original>
    <variation>A</variation>
    <location>
        <position position="16"/>
    </location>
</feature>
<feature type="mutagenesis site" description="Nucleotide-binding-deficient, no ATPase activity, cannot bind DNA. No effect on dimerization." evidence="1">
    <original>K</original>
    <variation>A</variation>
    <location>
        <position position="20"/>
    </location>
</feature>
<feature type="mutagenesis site" description="ATP hydrolysis-deficient. Forms only dimers in the presence of ATP." evidence="1">
    <original>D</original>
    <variation>V</variation>
    <location>
        <position position="44"/>
    </location>
</feature>
<feature type="strand" evidence="7">
    <location>
        <begin position="8"/>
        <end position="11"/>
    </location>
</feature>
<feature type="helix" evidence="7">
    <location>
        <begin position="18"/>
        <end position="33"/>
    </location>
</feature>
<feature type="strand" evidence="7">
    <location>
        <begin position="38"/>
        <end position="42"/>
    </location>
</feature>
<feature type="helix" evidence="7">
    <location>
        <begin position="48"/>
        <end position="52"/>
    </location>
</feature>
<feature type="strand" evidence="8">
    <location>
        <begin position="58"/>
        <end position="60"/>
    </location>
</feature>
<feature type="helix" evidence="7">
    <location>
        <begin position="61"/>
        <end position="65"/>
    </location>
</feature>
<feature type="helix" evidence="7">
    <location>
        <begin position="70"/>
        <end position="72"/>
    </location>
</feature>
<feature type="strand" evidence="7">
    <location>
        <begin position="75"/>
        <end position="77"/>
    </location>
</feature>
<feature type="strand" evidence="7">
    <location>
        <begin position="80"/>
        <end position="83"/>
    </location>
</feature>
<feature type="turn" evidence="7">
    <location>
        <begin position="87"/>
        <end position="89"/>
    </location>
</feature>
<feature type="helix" evidence="7">
    <location>
        <begin position="90"/>
        <end position="96"/>
    </location>
</feature>
<feature type="helix" evidence="7">
    <location>
        <begin position="102"/>
        <end position="106"/>
    </location>
</feature>
<feature type="strand" evidence="7">
    <location>
        <begin position="113"/>
        <end position="118"/>
    </location>
</feature>
<feature type="helix" evidence="7">
    <location>
        <begin position="125"/>
        <end position="133"/>
    </location>
</feature>
<feature type="strand" evidence="7">
    <location>
        <begin position="135"/>
        <end position="144"/>
    </location>
</feature>
<feature type="helix" evidence="7">
    <location>
        <begin position="147"/>
        <end position="164"/>
    </location>
</feature>
<feature type="strand" evidence="7">
    <location>
        <begin position="170"/>
        <end position="179"/>
    </location>
</feature>
<feature type="helix" evidence="7">
    <location>
        <begin position="185"/>
        <end position="197"/>
    </location>
</feature>
<feature type="helix" evidence="7">
    <location>
        <begin position="198"/>
        <end position="200"/>
    </location>
</feature>
<feature type="helix" evidence="7">
    <location>
        <begin position="210"/>
        <end position="218"/>
    </location>
</feature>
<feature type="helix" evidence="7">
    <location>
        <begin position="222"/>
        <end position="225"/>
    </location>
</feature>
<feature type="helix" evidence="7">
    <location>
        <begin position="230"/>
        <end position="246"/>
    </location>
</feature>
<dbReference type="EC" id="3.6.4.-" evidence="1"/>
<dbReference type="EMBL" id="AE017221">
    <property type="protein sequence ID" value="AAS81947.1"/>
    <property type="molecule type" value="Genomic_DNA"/>
</dbReference>
<dbReference type="RefSeq" id="WP_011173976.1">
    <property type="nucleotide sequence ID" value="NC_005835.1"/>
</dbReference>
<dbReference type="PDB" id="1WCV">
    <property type="method" value="X-ray"/>
    <property type="resolution" value="1.60 A"/>
    <property type="chains" value="1=1-249"/>
</dbReference>
<dbReference type="PDB" id="2BEJ">
    <property type="method" value="X-ray"/>
    <property type="resolution" value="2.10 A"/>
    <property type="chains" value="A=1-249"/>
</dbReference>
<dbReference type="PDB" id="2BEK">
    <property type="method" value="X-ray"/>
    <property type="resolution" value="1.80 A"/>
    <property type="chains" value="A/B/C/D=1-249"/>
</dbReference>
<dbReference type="PDBsum" id="1WCV"/>
<dbReference type="PDBsum" id="2BEJ"/>
<dbReference type="PDBsum" id="2BEK"/>
<dbReference type="SMR" id="Q72H90"/>
<dbReference type="KEGG" id="tth:TT_C1605"/>
<dbReference type="eggNOG" id="COG1192">
    <property type="taxonomic scope" value="Bacteria"/>
</dbReference>
<dbReference type="HOGENOM" id="CLU_037612_1_4_0"/>
<dbReference type="OrthoDB" id="9815116at2"/>
<dbReference type="EvolutionaryTrace" id="Q72H90"/>
<dbReference type="Proteomes" id="UP000000592">
    <property type="component" value="Chromosome"/>
</dbReference>
<dbReference type="GO" id="GO:0005524">
    <property type="term" value="F:ATP binding"/>
    <property type="evidence" value="ECO:0007669"/>
    <property type="project" value="UniProtKB-KW"/>
</dbReference>
<dbReference type="GO" id="GO:0016887">
    <property type="term" value="F:ATP hydrolysis activity"/>
    <property type="evidence" value="ECO:0007669"/>
    <property type="project" value="RHEA"/>
</dbReference>
<dbReference type="GO" id="GO:0003677">
    <property type="term" value="F:DNA binding"/>
    <property type="evidence" value="ECO:0007669"/>
    <property type="project" value="UniProtKB-KW"/>
</dbReference>
<dbReference type="GO" id="GO:0007059">
    <property type="term" value="P:chromosome segregation"/>
    <property type="evidence" value="ECO:0007669"/>
    <property type="project" value="UniProtKB-KW"/>
</dbReference>
<dbReference type="CDD" id="cd02042">
    <property type="entry name" value="ParAB_family"/>
    <property type="match status" value="1"/>
</dbReference>
<dbReference type="FunFam" id="3.40.50.300:FF:000285">
    <property type="entry name" value="Sporulation initiation inhibitor Soj"/>
    <property type="match status" value="1"/>
</dbReference>
<dbReference type="Gene3D" id="3.40.50.300">
    <property type="entry name" value="P-loop containing nucleotide triphosphate hydrolases"/>
    <property type="match status" value="1"/>
</dbReference>
<dbReference type="InterPro" id="IPR025669">
    <property type="entry name" value="AAA_dom"/>
</dbReference>
<dbReference type="InterPro" id="IPR050678">
    <property type="entry name" value="DNA_Partitioning_ATPase"/>
</dbReference>
<dbReference type="InterPro" id="IPR027417">
    <property type="entry name" value="P-loop_NTPase"/>
</dbReference>
<dbReference type="PANTHER" id="PTHR13696">
    <property type="entry name" value="P-LOOP CONTAINING NUCLEOSIDE TRIPHOSPHATE HYDROLASE"/>
    <property type="match status" value="1"/>
</dbReference>
<dbReference type="PANTHER" id="PTHR13696:SF52">
    <property type="entry name" value="PARA FAMILY PROTEIN CT_582"/>
    <property type="match status" value="1"/>
</dbReference>
<dbReference type="Pfam" id="PF13614">
    <property type="entry name" value="AAA_31"/>
    <property type="match status" value="1"/>
</dbReference>
<dbReference type="PIRSF" id="PIRSF009320">
    <property type="entry name" value="Nuc_binding_HP_1000"/>
    <property type="match status" value="1"/>
</dbReference>
<dbReference type="SUPFAM" id="SSF52540">
    <property type="entry name" value="P-loop containing nucleoside triphosphate hydrolases"/>
    <property type="match status" value="1"/>
</dbReference>
<organism>
    <name type="scientific">Thermus thermophilus (strain ATCC BAA-163 / DSM 7039 / HB27)</name>
    <dbReference type="NCBI Taxonomy" id="262724"/>
    <lineage>
        <taxon>Bacteria</taxon>
        <taxon>Thermotogati</taxon>
        <taxon>Deinococcota</taxon>
        <taxon>Deinococci</taxon>
        <taxon>Thermales</taxon>
        <taxon>Thermaceae</taxon>
        <taxon>Thermus</taxon>
    </lineage>
</organism>